<keyword id="KW-0963">Cytoplasm</keyword>
<keyword id="KW-0378">Hydrolase</keyword>
<keyword id="KW-0540">Nuclease</keyword>
<keyword id="KW-1185">Reference proteome</keyword>
<keyword id="KW-0690">Ribosome biogenesis</keyword>
<reference key="1">
    <citation type="journal article" date="2005" name="Science">
        <title>Genome streamlining in a cosmopolitan oceanic bacterium.</title>
        <authorList>
            <person name="Giovannoni S.J."/>
            <person name="Tripp H.J."/>
            <person name="Givan S."/>
            <person name="Podar M."/>
            <person name="Vergin K.L."/>
            <person name="Baptista D."/>
            <person name="Bibbs L."/>
            <person name="Eads J."/>
            <person name="Richardson T.H."/>
            <person name="Noordewier M."/>
            <person name="Rappe M.S."/>
            <person name="Short J.M."/>
            <person name="Carrington J.C."/>
            <person name="Mathur E.J."/>
        </authorList>
    </citation>
    <scope>NUCLEOTIDE SEQUENCE [LARGE SCALE GENOMIC DNA]</scope>
    <source>
        <strain>HTCC1062</strain>
    </source>
</reference>
<comment type="function">
    <text evidence="1">Could be a nuclease involved in processing of the 5'-end of pre-16S rRNA.</text>
</comment>
<comment type="subcellular location">
    <subcellularLocation>
        <location evidence="1">Cytoplasm</location>
    </subcellularLocation>
</comment>
<comment type="similarity">
    <text evidence="1">Belongs to the YqgF nuclease family.</text>
</comment>
<sequence length="151" mass="16497">MITIEDFKIKHTNKVRFIGLDLGSKRIGVSICDERQSIATPFKTINKTNTNELIDELKIIIKDNNIGGIIVGNPVNMDGSLGRSAQSVNDVASNISKSIDLPVILWDERLSTVGAFNLSSLLDVNVSKRVKTIDQNAAAFILQGAIDFLNN</sequence>
<name>YQGF_PELUB</name>
<accession>Q4FLQ5</accession>
<organism>
    <name type="scientific">Pelagibacter ubique (strain HTCC1062)</name>
    <dbReference type="NCBI Taxonomy" id="335992"/>
    <lineage>
        <taxon>Bacteria</taxon>
        <taxon>Pseudomonadati</taxon>
        <taxon>Pseudomonadota</taxon>
        <taxon>Alphaproteobacteria</taxon>
        <taxon>Candidatus Pelagibacterales</taxon>
        <taxon>Candidatus Pelagibacteraceae</taxon>
        <taxon>Candidatus Pelagibacter</taxon>
    </lineage>
</organism>
<proteinExistence type="inferred from homology"/>
<dbReference type="EC" id="3.1.-.-" evidence="1"/>
<dbReference type="EMBL" id="CP000084">
    <property type="protein sequence ID" value="AAZ21883.1"/>
    <property type="molecule type" value="Genomic_DNA"/>
</dbReference>
<dbReference type="SMR" id="Q4FLQ5"/>
<dbReference type="STRING" id="335992.SAR11_1079"/>
<dbReference type="GeneID" id="66295569"/>
<dbReference type="KEGG" id="pub:SAR11_1079"/>
<dbReference type="eggNOG" id="COG0816">
    <property type="taxonomic scope" value="Bacteria"/>
</dbReference>
<dbReference type="HOGENOM" id="CLU_098240_1_1_5"/>
<dbReference type="OrthoDB" id="9796140at2"/>
<dbReference type="Proteomes" id="UP000002528">
    <property type="component" value="Chromosome"/>
</dbReference>
<dbReference type="GO" id="GO:0005829">
    <property type="term" value="C:cytosol"/>
    <property type="evidence" value="ECO:0007669"/>
    <property type="project" value="TreeGrafter"/>
</dbReference>
<dbReference type="GO" id="GO:0004518">
    <property type="term" value="F:nuclease activity"/>
    <property type="evidence" value="ECO:0007669"/>
    <property type="project" value="UniProtKB-KW"/>
</dbReference>
<dbReference type="GO" id="GO:0000967">
    <property type="term" value="P:rRNA 5'-end processing"/>
    <property type="evidence" value="ECO:0007669"/>
    <property type="project" value="UniProtKB-UniRule"/>
</dbReference>
<dbReference type="CDD" id="cd16964">
    <property type="entry name" value="YqgF"/>
    <property type="match status" value="1"/>
</dbReference>
<dbReference type="Gene3D" id="3.30.420.140">
    <property type="entry name" value="YqgF/RNase H-like domain"/>
    <property type="match status" value="1"/>
</dbReference>
<dbReference type="HAMAP" id="MF_00651">
    <property type="entry name" value="Nuclease_YqgF"/>
    <property type="match status" value="1"/>
</dbReference>
<dbReference type="InterPro" id="IPR012337">
    <property type="entry name" value="RNaseH-like_sf"/>
</dbReference>
<dbReference type="InterPro" id="IPR005227">
    <property type="entry name" value="YqgF"/>
</dbReference>
<dbReference type="InterPro" id="IPR006641">
    <property type="entry name" value="YqgF/RNaseH-like_dom"/>
</dbReference>
<dbReference type="InterPro" id="IPR037027">
    <property type="entry name" value="YqgF/RNaseH-like_dom_sf"/>
</dbReference>
<dbReference type="NCBIfam" id="TIGR00250">
    <property type="entry name" value="RNAse_H_YqgF"/>
    <property type="match status" value="1"/>
</dbReference>
<dbReference type="PANTHER" id="PTHR33317">
    <property type="entry name" value="POLYNUCLEOTIDYL TRANSFERASE, RIBONUCLEASE H-LIKE SUPERFAMILY PROTEIN"/>
    <property type="match status" value="1"/>
</dbReference>
<dbReference type="PANTHER" id="PTHR33317:SF4">
    <property type="entry name" value="POLYNUCLEOTIDYL TRANSFERASE, RIBONUCLEASE H-LIKE SUPERFAMILY PROTEIN"/>
    <property type="match status" value="1"/>
</dbReference>
<dbReference type="Pfam" id="PF03652">
    <property type="entry name" value="RuvX"/>
    <property type="match status" value="1"/>
</dbReference>
<dbReference type="SMART" id="SM00732">
    <property type="entry name" value="YqgFc"/>
    <property type="match status" value="1"/>
</dbReference>
<dbReference type="SUPFAM" id="SSF53098">
    <property type="entry name" value="Ribonuclease H-like"/>
    <property type="match status" value="1"/>
</dbReference>
<evidence type="ECO:0000255" key="1">
    <source>
        <dbReference type="HAMAP-Rule" id="MF_00651"/>
    </source>
</evidence>
<feature type="chain" id="PRO_0000257559" description="Putative pre-16S rRNA nuclease">
    <location>
        <begin position="1"/>
        <end position="151"/>
    </location>
</feature>
<protein>
    <recommendedName>
        <fullName evidence="1">Putative pre-16S rRNA nuclease</fullName>
        <ecNumber evidence="1">3.1.-.-</ecNumber>
    </recommendedName>
</protein>
<gene>
    <name type="ordered locus">SAR11_1079</name>
</gene>